<keyword id="KW-0067">ATP-binding</keyword>
<keyword id="KW-0418">Kinase</keyword>
<keyword id="KW-0460">Magnesium</keyword>
<keyword id="KW-0479">Metal-binding</keyword>
<keyword id="KW-0511">Multifunctional enzyme</keyword>
<keyword id="KW-0547">Nucleotide-binding</keyword>
<keyword id="KW-0723">Serine/threonine-protein kinase</keyword>
<keyword id="KW-0808">Transferase</keyword>
<proteinExistence type="inferred from homology"/>
<protein>
    <recommendedName>
        <fullName evidence="1">HPr kinase/phosphorylase</fullName>
        <shortName evidence="1">HPrK/P</shortName>
        <ecNumber evidence="1">2.7.11.-</ecNumber>
        <ecNumber evidence="1">2.7.4.-</ecNumber>
    </recommendedName>
    <alternativeName>
        <fullName evidence="1">HPr(Ser) kinase/phosphorylase</fullName>
    </alternativeName>
</protein>
<accession>B0S8M8</accession>
<dbReference type="EC" id="2.7.11.-" evidence="1"/>
<dbReference type="EC" id="2.7.4.-" evidence="1"/>
<dbReference type="EMBL" id="CP000777">
    <property type="protein sequence ID" value="ABZ94109.1"/>
    <property type="molecule type" value="Genomic_DNA"/>
</dbReference>
<dbReference type="RefSeq" id="WP_012388636.1">
    <property type="nucleotide sequence ID" value="NC_010842.1"/>
</dbReference>
<dbReference type="SMR" id="B0S8M8"/>
<dbReference type="KEGG" id="lbf:LBF_1601"/>
<dbReference type="HOGENOM" id="CLU_052030_0_1_12"/>
<dbReference type="GO" id="GO:0005524">
    <property type="term" value="F:ATP binding"/>
    <property type="evidence" value="ECO:0007669"/>
    <property type="project" value="UniProtKB-UniRule"/>
</dbReference>
<dbReference type="GO" id="GO:0000287">
    <property type="term" value="F:magnesium ion binding"/>
    <property type="evidence" value="ECO:0007669"/>
    <property type="project" value="UniProtKB-UniRule"/>
</dbReference>
<dbReference type="GO" id="GO:0000155">
    <property type="term" value="F:phosphorelay sensor kinase activity"/>
    <property type="evidence" value="ECO:0007669"/>
    <property type="project" value="InterPro"/>
</dbReference>
<dbReference type="GO" id="GO:0004674">
    <property type="term" value="F:protein serine/threonine kinase activity"/>
    <property type="evidence" value="ECO:0007669"/>
    <property type="project" value="UniProtKB-KW"/>
</dbReference>
<dbReference type="GO" id="GO:0004712">
    <property type="term" value="F:protein serine/threonine/tyrosine kinase activity"/>
    <property type="evidence" value="ECO:0007669"/>
    <property type="project" value="UniProtKB-UniRule"/>
</dbReference>
<dbReference type="GO" id="GO:0006109">
    <property type="term" value="P:regulation of carbohydrate metabolic process"/>
    <property type="evidence" value="ECO:0007669"/>
    <property type="project" value="UniProtKB-UniRule"/>
</dbReference>
<dbReference type="CDD" id="cd01918">
    <property type="entry name" value="HprK_C"/>
    <property type="match status" value="1"/>
</dbReference>
<dbReference type="FunFam" id="3.40.50.300:FF:000174">
    <property type="entry name" value="HPr kinase/phosphorylase"/>
    <property type="match status" value="1"/>
</dbReference>
<dbReference type="Gene3D" id="3.40.1390.20">
    <property type="entry name" value="HprK N-terminal domain-like"/>
    <property type="match status" value="1"/>
</dbReference>
<dbReference type="Gene3D" id="3.40.50.300">
    <property type="entry name" value="P-loop containing nucleotide triphosphate hydrolases"/>
    <property type="match status" value="1"/>
</dbReference>
<dbReference type="HAMAP" id="MF_01249">
    <property type="entry name" value="HPr_kinase"/>
    <property type="match status" value="1"/>
</dbReference>
<dbReference type="InterPro" id="IPR003755">
    <property type="entry name" value="HPr(Ser)_kin/Pase"/>
</dbReference>
<dbReference type="InterPro" id="IPR011104">
    <property type="entry name" value="Hpr_kin/Pase_C"/>
</dbReference>
<dbReference type="InterPro" id="IPR011126">
    <property type="entry name" value="Hpr_kin/Pase_Hpr_N"/>
</dbReference>
<dbReference type="InterPro" id="IPR027417">
    <property type="entry name" value="P-loop_NTPase"/>
</dbReference>
<dbReference type="InterPro" id="IPR028979">
    <property type="entry name" value="Ser_kin/Pase_Hpr-like_N_sf"/>
</dbReference>
<dbReference type="NCBIfam" id="TIGR00679">
    <property type="entry name" value="hpr-ser"/>
    <property type="match status" value="1"/>
</dbReference>
<dbReference type="PANTHER" id="PTHR30305:SF1">
    <property type="entry name" value="HPR KINASE_PHOSPHORYLASE"/>
    <property type="match status" value="1"/>
</dbReference>
<dbReference type="PANTHER" id="PTHR30305">
    <property type="entry name" value="PROTEIN YJDM-RELATED"/>
    <property type="match status" value="1"/>
</dbReference>
<dbReference type="Pfam" id="PF07475">
    <property type="entry name" value="Hpr_kinase_C"/>
    <property type="match status" value="1"/>
</dbReference>
<dbReference type="Pfam" id="PF02603">
    <property type="entry name" value="Hpr_kinase_N"/>
    <property type="match status" value="1"/>
</dbReference>
<dbReference type="SUPFAM" id="SSF75138">
    <property type="entry name" value="HprK N-terminal domain-like"/>
    <property type="match status" value="1"/>
</dbReference>
<dbReference type="SUPFAM" id="SSF53795">
    <property type="entry name" value="PEP carboxykinase-like"/>
    <property type="match status" value="1"/>
</dbReference>
<sequence length="322" mass="36306">MPVPGITVETILRDHDDLQLQLVTGEVGLSNRINSAEINRPGLSLTGFFDFFANDRIQILGKGEWAYLNSLSEEKLGEITDKFFEFHLNCIIYTHGNEPQVPFVERAKEKGIPLFKTEIATHRFITLISQILDRALAPRTMRHGVLIEVFGIGTLLTGRSGVGKSETALELIERGHRLVADDMVEIRRLSESYLIGSCSDLLRHHMEIRGLGILNIKDLFGVGSVRDHKLIELIINLKEWEEQTSGDYERTGIEQSMEEILGVSVPYIEIPVKPGRNIPIIVETAAMNQRLRKMGKNSAKEFSNKLNTYIQQSSIETNPIKD</sequence>
<gene>
    <name evidence="1" type="primary">hprK</name>
    <name type="ordered locus">LBF_1601</name>
</gene>
<name>HPRK_LEPBA</name>
<feature type="chain" id="PRO_1000139903" description="HPr kinase/phosphorylase">
    <location>
        <begin position="1"/>
        <end position="322"/>
    </location>
</feature>
<feature type="region of interest" description="Important for the catalytic mechanism of both phosphorylation and dephosphorylation" evidence="1">
    <location>
        <begin position="206"/>
        <end position="215"/>
    </location>
</feature>
<feature type="region of interest" description="Important for the catalytic mechanism of dephosphorylation" evidence="1">
    <location>
        <begin position="271"/>
        <end position="276"/>
    </location>
</feature>
<feature type="active site" evidence="1">
    <location>
        <position position="143"/>
    </location>
</feature>
<feature type="active site" evidence="1">
    <location>
        <position position="164"/>
    </location>
</feature>
<feature type="active site" description="Proton acceptor; for phosphorylation activity. Proton donor; for dephosphorylation activity" evidence="1">
    <location>
        <position position="182"/>
    </location>
</feature>
<feature type="active site" evidence="1">
    <location>
        <position position="250"/>
    </location>
</feature>
<feature type="binding site" evidence="1">
    <location>
        <begin position="158"/>
        <end position="165"/>
    </location>
    <ligand>
        <name>ATP</name>
        <dbReference type="ChEBI" id="CHEBI:30616"/>
    </ligand>
</feature>
<feature type="binding site" evidence="1">
    <location>
        <position position="165"/>
    </location>
    <ligand>
        <name>Mg(2+)</name>
        <dbReference type="ChEBI" id="CHEBI:18420"/>
    </ligand>
</feature>
<feature type="binding site" evidence="1">
    <location>
        <position position="207"/>
    </location>
    <ligand>
        <name>Mg(2+)</name>
        <dbReference type="ChEBI" id="CHEBI:18420"/>
    </ligand>
</feature>
<reference key="1">
    <citation type="journal article" date="2008" name="PLoS ONE">
        <title>Genome sequence of the saprophyte Leptospira biflexa provides insights into the evolution of Leptospira and the pathogenesis of leptospirosis.</title>
        <authorList>
            <person name="Picardeau M."/>
            <person name="Bulach D.M."/>
            <person name="Bouchier C."/>
            <person name="Zuerner R.L."/>
            <person name="Zidane N."/>
            <person name="Wilson P.J."/>
            <person name="Creno S."/>
            <person name="Kuczek E.S."/>
            <person name="Bommezzadri S."/>
            <person name="Davis J.C."/>
            <person name="McGrath A."/>
            <person name="Johnson M.J."/>
            <person name="Boursaux-Eude C."/>
            <person name="Seemann T."/>
            <person name="Rouy Z."/>
            <person name="Coppel R.L."/>
            <person name="Rood J.I."/>
            <person name="Lajus A."/>
            <person name="Davies J.K."/>
            <person name="Medigue C."/>
            <person name="Adler B."/>
        </authorList>
    </citation>
    <scope>NUCLEOTIDE SEQUENCE [LARGE SCALE GENOMIC DNA]</scope>
    <source>
        <strain>Patoc 1 / Ames</strain>
    </source>
</reference>
<evidence type="ECO:0000255" key="1">
    <source>
        <dbReference type="HAMAP-Rule" id="MF_01249"/>
    </source>
</evidence>
<organism>
    <name type="scientific">Leptospira biflexa serovar Patoc (strain Patoc 1 / Ames)</name>
    <dbReference type="NCBI Taxonomy" id="355278"/>
    <lineage>
        <taxon>Bacteria</taxon>
        <taxon>Pseudomonadati</taxon>
        <taxon>Spirochaetota</taxon>
        <taxon>Spirochaetia</taxon>
        <taxon>Leptospirales</taxon>
        <taxon>Leptospiraceae</taxon>
        <taxon>Leptospira</taxon>
    </lineage>
</organism>
<comment type="function">
    <text evidence="1">Catalyzes the ATP- as well as the pyrophosphate-dependent phosphorylation of a specific serine residue in HPr, a phosphocarrier protein of the phosphoenolpyruvate-dependent sugar phosphotransferase system (PTS). HprK/P also catalyzes the pyrophosphate-producing, inorganic phosphate-dependent dephosphorylation (phosphorolysis) of seryl-phosphorylated HPr (P-Ser-HPr).</text>
</comment>
<comment type="catalytic activity">
    <reaction evidence="1">
        <text>[HPr protein]-L-serine + ATP = [HPr protein]-O-phospho-L-serine + ADP + H(+)</text>
        <dbReference type="Rhea" id="RHEA:46600"/>
        <dbReference type="Rhea" id="RHEA-COMP:11602"/>
        <dbReference type="Rhea" id="RHEA-COMP:11603"/>
        <dbReference type="ChEBI" id="CHEBI:15378"/>
        <dbReference type="ChEBI" id="CHEBI:29999"/>
        <dbReference type="ChEBI" id="CHEBI:30616"/>
        <dbReference type="ChEBI" id="CHEBI:83421"/>
        <dbReference type="ChEBI" id="CHEBI:456216"/>
    </reaction>
</comment>
<comment type="catalytic activity">
    <reaction evidence="1">
        <text>[HPr protein]-O-phospho-L-serine + phosphate + H(+) = [HPr protein]-L-serine + diphosphate</text>
        <dbReference type="Rhea" id="RHEA:46604"/>
        <dbReference type="Rhea" id="RHEA-COMP:11602"/>
        <dbReference type="Rhea" id="RHEA-COMP:11603"/>
        <dbReference type="ChEBI" id="CHEBI:15378"/>
        <dbReference type="ChEBI" id="CHEBI:29999"/>
        <dbReference type="ChEBI" id="CHEBI:33019"/>
        <dbReference type="ChEBI" id="CHEBI:43474"/>
        <dbReference type="ChEBI" id="CHEBI:83421"/>
    </reaction>
</comment>
<comment type="cofactor">
    <cofactor evidence="1">
        <name>Mg(2+)</name>
        <dbReference type="ChEBI" id="CHEBI:18420"/>
    </cofactor>
</comment>
<comment type="subunit">
    <text evidence="1">Homohexamer.</text>
</comment>
<comment type="domain">
    <text evidence="1">The Walker A ATP-binding motif also binds Pi and PPi.</text>
</comment>
<comment type="miscellaneous">
    <text evidence="1">Both phosphorylation and phosphorolysis are carried out by the same active site and suggest a common mechanism for both reactions.</text>
</comment>
<comment type="similarity">
    <text evidence="1">Belongs to the HPrK/P family.</text>
</comment>